<keyword id="KW-0997">Cell inner membrane</keyword>
<keyword id="KW-1003">Cell membrane</keyword>
<keyword id="KW-0472">Membrane</keyword>
<keyword id="KW-0812">Transmembrane</keyword>
<keyword id="KW-1133">Transmembrane helix</keyword>
<keyword id="KW-0813">Transport</keyword>
<reference key="1">
    <citation type="journal article" date="2011" name="J. Bacteriol.">
        <title>Comparative genomics of 28 Salmonella enterica isolates: evidence for CRISPR-mediated adaptive sublineage evolution.</title>
        <authorList>
            <person name="Fricke W.F."/>
            <person name="Mammel M.K."/>
            <person name="McDermott P.F."/>
            <person name="Tartera C."/>
            <person name="White D.G."/>
            <person name="Leclerc J.E."/>
            <person name="Ravel J."/>
            <person name="Cebula T.A."/>
        </authorList>
    </citation>
    <scope>NUCLEOTIDE SEQUENCE [LARGE SCALE GENOMIC DNA]</scope>
    <source>
        <strain>SL254</strain>
    </source>
</reference>
<name>MDTG_SALNS</name>
<comment type="subcellular location">
    <subcellularLocation>
        <location evidence="1">Cell inner membrane</location>
        <topology evidence="1">Multi-pass membrane protein</topology>
    </subcellularLocation>
</comment>
<comment type="similarity">
    <text evidence="1">Belongs to the major facilitator superfamily. DHA1 family. MdtG (TC 2.A.1.2.20) subfamily.</text>
</comment>
<feature type="chain" id="PRO_1000200791" description="Multidrug resistance protein MdtG">
    <location>
        <begin position="1"/>
        <end position="404"/>
    </location>
</feature>
<feature type="transmembrane region" description="Helical" evidence="1">
    <location>
        <begin position="19"/>
        <end position="39"/>
    </location>
</feature>
<feature type="transmembrane region" description="Helical" evidence="1">
    <location>
        <begin position="56"/>
        <end position="76"/>
    </location>
</feature>
<feature type="transmembrane region" description="Helical" evidence="1">
    <location>
        <begin position="90"/>
        <end position="110"/>
    </location>
</feature>
<feature type="transmembrane region" description="Helical" evidence="1">
    <location>
        <begin position="113"/>
        <end position="133"/>
    </location>
</feature>
<feature type="transmembrane region" description="Helical" evidence="1">
    <location>
        <begin position="144"/>
        <end position="164"/>
    </location>
</feature>
<feature type="transmembrane region" description="Helical" evidence="1">
    <location>
        <begin position="171"/>
        <end position="191"/>
    </location>
</feature>
<feature type="transmembrane region" description="Helical" evidence="1">
    <location>
        <begin position="222"/>
        <end position="242"/>
    </location>
</feature>
<feature type="transmembrane region" description="Helical" evidence="1">
    <location>
        <begin position="254"/>
        <end position="274"/>
    </location>
</feature>
<feature type="transmembrane region" description="Helical" evidence="1">
    <location>
        <begin position="288"/>
        <end position="308"/>
    </location>
</feature>
<feature type="transmembrane region" description="Helical" evidence="1">
    <location>
        <begin position="317"/>
        <end position="337"/>
    </location>
</feature>
<feature type="transmembrane region" description="Helical" evidence="1">
    <location>
        <begin position="376"/>
        <end position="396"/>
    </location>
</feature>
<evidence type="ECO:0000255" key="1">
    <source>
        <dbReference type="HAMAP-Rule" id="MF_01528"/>
    </source>
</evidence>
<sequence length="404" mass="43596">MSPSDVPINWKRNLTVTWLGCFLTGAAFSLVMPFLPLYVEQLGVTGHSALNMWSGLVFSITFLFSAIASPFWGGLADRKGRKIMLLRSALGMAIVMLLMGMAQNIWQFLILRALLGLLGGFIPNANALIATQVPRHKSGWALGTLSTGGVSGALLGPLAGGLLADHYGLRPVFFITASVLFICFLLTFFFIRENFLPVSKKEMLHVREVVASLKNPRLVLSLFVTTLIIQVATGSIAPILTLYVRELAGNVSNIAFISGMIASVPGVAALLSAPRLGKLGDRIGPEKILIVALIISVLLLIPMSFVQTPWQLALLRFLLGAADGALLPAVQTLLVYNSTNQIAGRIFSYNQSFRDIGNVTGPLMGAAISASYGFRAVFCVTAGVVLFNAIYSWNSLRRRRLAIE</sequence>
<protein>
    <recommendedName>
        <fullName evidence="1">Multidrug resistance protein MdtG</fullName>
    </recommendedName>
</protein>
<gene>
    <name evidence="1" type="primary">mdtG</name>
    <name type="ordered locus">SNSL254_A1250</name>
</gene>
<dbReference type="EMBL" id="CP001113">
    <property type="protein sequence ID" value="ACF65056.1"/>
    <property type="molecule type" value="Genomic_DNA"/>
</dbReference>
<dbReference type="RefSeq" id="WP_000075053.1">
    <property type="nucleotide sequence ID" value="NZ_CCMR01000003.1"/>
</dbReference>
<dbReference type="SMR" id="B4T2Y5"/>
<dbReference type="KEGG" id="see:SNSL254_A1250"/>
<dbReference type="HOGENOM" id="CLU_001265_57_3_6"/>
<dbReference type="Proteomes" id="UP000008824">
    <property type="component" value="Chromosome"/>
</dbReference>
<dbReference type="GO" id="GO:0005886">
    <property type="term" value="C:plasma membrane"/>
    <property type="evidence" value="ECO:0007669"/>
    <property type="project" value="UniProtKB-SubCell"/>
</dbReference>
<dbReference type="GO" id="GO:0022857">
    <property type="term" value="F:transmembrane transporter activity"/>
    <property type="evidence" value="ECO:0007669"/>
    <property type="project" value="UniProtKB-UniRule"/>
</dbReference>
<dbReference type="CDD" id="cd17391">
    <property type="entry name" value="MFS_MdtG_MDR_like"/>
    <property type="match status" value="1"/>
</dbReference>
<dbReference type="FunFam" id="1.20.1250.20:FF:000020">
    <property type="entry name" value="Multidrug resistance protein MdtG"/>
    <property type="match status" value="1"/>
</dbReference>
<dbReference type="FunFam" id="1.20.1250.20:FF:000022">
    <property type="entry name" value="Multidrug resistance protein MdtG"/>
    <property type="match status" value="1"/>
</dbReference>
<dbReference type="Gene3D" id="1.20.1250.20">
    <property type="entry name" value="MFS general substrate transporter like domains"/>
    <property type="match status" value="2"/>
</dbReference>
<dbReference type="HAMAP" id="MF_01528">
    <property type="entry name" value="MFS_MdtG"/>
    <property type="match status" value="1"/>
</dbReference>
<dbReference type="InterPro" id="IPR011701">
    <property type="entry name" value="MFS"/>
</dbReference>
<dbReference type="InterPro" id="IPR020846">
    <property type="entry name" value="MFS_dom"/>
</dbReference>
<dbReference type="InterPro" id="IPR050497">
    <property type="entry name" value="MFS_MdtG_subfamily"/>
</dbReference>
<dbReference type="InterPro" id="IPR005828">
    <property type="entry name" value="MFS_sugar_transport-like"/>
</dbReference>
<dbReference type="InterPro" id="IPR036259">
    <property type="entry name" value="MFS_trans_sf"/>
</dbReference>
<dbReference type="InterPro" id="IPR023692">
    <property type="entry name" value="Mutidrug-R_MdtG"/>
</dbReference>
<dbReference type="InterPro" id="IPR001958">
    <property type="entry name" value="Tet-R_TetA/multi-R_MdtG-like"/>
</dbReference>
<dbReference type="NCBIfam" id="NF007372">
    <property type="entry name" value="PRK09874.1"/>
    <property type="match status" value="1"/>
</dbReference>
<dbReference type="PANTHER" id="PTHR43414">
    <property type="entry name" value="MULTIDRUG RESISTANCE PROTEIN MDTG"/>
    <property type="match status" value="1"/>
</dbReference>
<dbReference type="PANTHER" id="PTHR43414:SF6">
    <property type="entry name" value="MULTIDRUG RESISTANCE PROTEIN MDTG"/>
    <property type="match status" value="1"/>
</dbReference>
<dbReference type="Pfam" id="PF07690">
    <property type="entry name" value="MFS_1"/>
    <property type="match status" value="1"/>
</dbReference>
<dbReference type="Pfam" id="PF00083">
    <property type="entry name" value="Sugar_tr"/>
    <property type="match status" value="1"/>
</dbReference>
<dbReference type="PRINTS" id="PR01035">
    <property type="entry name" value="TCRTETA"/>
</dbReference>
<dbReference type="SUPFAM" id="SSF103473">
    <property type="entry name" value="MFS general substrate transporter"/>
    <property type="match status" value="1"/>
</dbReference>
<dbReference type="PROSITE" id="PS50850">
    <property type="entry name" value="MFS"/>
    <property type="match status" value="1"/>
</dbReference>
<accession>B4T2Y5</accession>
<proteinExistence type="inferred from homology"/>
<organism>
    <name type="scientific">Salmonella newport (strain SL254)</name>
    <dbReference type="NCBI Taxonomy" id="423368"/>
    <lineage>
        <taxon>Bacteria</taxon>
        <taxon>Pseudomonadati</taxon>
        <taxon>Pseudomonadota</taxon>
        <taxon>Gammaproteobacteria</taxon>
        <taxon>Enterobacterales</taxon>
        <taxon>Enterobacteriaceae</taxon>
        <taxon>Salmonella</taxon>
    </lineage>
</organism>